<gene>
    <name evidence="1" type="primary">dut</name>
    <name type="ordered locus">BT_3461</name>
</gene>
<sequence length="144" mass="15590">MNVQVINKSKHPLPAYATELSAGMDIRANLSEPITLAPLQRCLVPTGIYIALPQGFEAQVRPRSGLAIKKGITVLNSPGTIDADYRGEVCIILVNLSSEPFVIEDGERIAQMVIARHEQAVWQEVEVLDETERGAGGFGHTGRG</sequence>
<name>DUT_BACTN</name>
<protein>
    <recommendedName>
        <fullName evidence="1">Deoxyuridine 5'-triphosphate nucleotidohydrolase</fullName>
        <shortName evidence="1">dUTPase</shortName>
        <ecNumber evidence="1">3.6.1.23</ecNumber>
    </recommendedName>
    <alternativeName>
        <fullName evidence="1">dUTP pyrophosphatase</fullName>
    </alternativeName>
</protein>
<feature type="chain" id="PRO_0000182826" description="Deoxyuridine 5'-triphosphate nucleotidohydrolase">
    <location>
        <begin position="1"/>
        <end position="144"/>
    </location>
</feature>
<feature type="binding site" evidence="1">
    <location>
        <begin position="63"/>
        <end position="65"/>
    </location>
    <ligand>
        <name>substrate</name>
    </ligand>
</feature>
<feature type="binding site" evidence="1">
    <location>
        <position position="76"/>
    </location>
    <ligand>
        <name>substrate</name>
    </ligand>
</feature>
<feature type="binding site" evidence="1">
    <location>
        <begin position="80"/>
        <end position="82"/>
    </location>
    <ligand>
        <name>substrate</name>
    </ligand>
</feature>
<dbReference type="EC" id="3.6.1.23" evidence="1"/>
<dbReference type="EMBL" id="AE015928">
    <property type="protein sequence ID" value="AAO78567.1"/>
    <property type="molecule type" value="Genomic_DNA"/>
</dbReference>
<dbReference type="RefSeq" id="NP_812373.1">
    <property type="nucleotide sequence ID" value="NC_004663.1"/>
</dbReference>
<dbReference type="RefSeq" id="WP_008767650.1">
    <property type="nucleotide sequence ID" value="NZ_UYXG01000003.1"/>
</dbReference>
<dbReference type="SMR" id="Q8A245"/>
<dbReference type="FunCoup" id="Q8A245">
    <property type="interactions" value="415"/>
</dbReference>
<dbReference type="STRING" id="226186.BT_3461"/>
<dbReference type="PaxDb" id="226186-BT_3461"/>
<dbReference type="EnsemblBacteria" id="AAO78567">
    <property type="protein sequence ID" value="AAO78567"/>
    <property type="gene ID" value="BT_3461"/>
</dbReference>
<dbReference type="GeneID" id="60924642"/>
<dbReference type="KEGG" id="bth:BT_3461"/>
<dbReference type="PATRIC" id="fig|226186.12.peg.3528"/>
<dbReference type="eggNOG" id="COG0756">
    <property type="taxonomic scope" value="Bacteria"/>
</dbReference>
<dbReference type="HOGENOM" id="CLU_068508_1_2_10"/>
<dbReference type="InParanoid" id="Q8A245"/>
<dbReference type="OrthoDB" id="9809956at2"/>
<dbReference type="UniPathway" id="UPA00610">
    <property type="reaction ID" value="UER00666"/>
</dbReference>
<dbReference type="Proteomes" id="UP000001414">
    <property type="component" value="Chromosome"/>
</dbReference>
<dbReference type="GO" id="GO:0004170">
    <property type="term" value="F:dUTP diphosphatase activity"/>
    <property type="evidence" value="ECO:0000318"/>
    <property type="project" value="GO_Central"/>
</dbReference>
<dbReference type="GO" id="GO:0000287">
    <property type="term" value="F:magnesium ion binding"/>
    <property type="evidence" value="ECO:0000318"/>
    <property type="project" value="GO_Central"/>
</dbReference>
<dbReference type="GO" id="GO:0006226">
    <property type="term" value="P:dUMP biosynthetic process"/>
    <property type="evidence" value="ECO:0000318"/>
    <property type="project" value="GO_Central"/>
</dbReference>
<dbReference type="GO" id="GO:0046081">
    <property type="term" value="P:dUTP catabolic process"/>
    <property type="evidence" value="ECO:0000318"/>
    <property type="project" value="GO_Central"/>
</dbReference>
<dbReference type="CDD" id="cd07557">
    <property type="entry name" value="trimeric_dUTPase"/>
    <property type="match status" value="1"/>
</dbReference>
<dbReference type="FunFam" id="2.70.40.10:FF:000002">
    <property type="entry name" value="dUTP diphosphatase"/>
    <property type="match status" value="1"/>
</dbReference>
<dbReference type="Gene3D" id="2.70.40.10">
    <property type="match status" value="1"/>
</dbReference>
<dbReference type="HAMAP" id="MF_00116">
    <property type="entry name" value="dUTPase_bact"/>
    <property type="match status" value="1"/>
</dbReference>
<dbReference type="InterPro" id="IPR008181">
    <property type="entry name" value="dUTPase"/>
</dbReference>
<dbReference type="InterPro" id="IPR029054">
    <property type="entry name" value="dUTPase-like"/>
</dbReference>
<dbReference type="InterPro" id="IPR036157">
    <property type="entry name" value="dUTPase-like_sf"/>
</dbReference>
<dbReference type="InterPro" id="IPR033704">
    <property type="entry name" value="dUTPase_trimeric"/>
</dbReference>
<dbReference type="NCBIfam" id="TIGR00576">
    <property type="entry name" value="dut"/>
    <property type="match status" value="1"/>
</dbReference>
<dbReference type="NCBIfam" id="NF001862">
    <property type="entry name" value="PRK00601.1"/>
    <property type="match status" value="1"/>
</dbReference>
<dbReference type="PANTHER" id="PTHR11241">
    <property type="entry name" value="DEOXYURIDINE 5'-TRIPHOSPHATE NUCLEOTIDOHYDROLASE"/>
    <property type="match status" value="1"/>
</dbReference>
<dbReference type="PANTHER" id="PTHR11241:SF0">
    <property type="entry name" value="DEOXYURIDINE 5'-TRIPHOSPHATE NUCLEOTIDOHYDROLASE"/>
    <property type="match status" value="1"/>
</dbReference>
<dbReference type="Pfam" id="PF00692">
    <property type="entry name" value="dUTPase"/>
    <property type="match status" value="1"/>
</dbReference>
<dbReference type="SUPFAM" id="SSF51283">
    <property type="entry name" value="dUTPase-like"/>
    <property type="match status" value="1"/>
</dbReference>
<reference key="1">
    <citation type="journal article" date="2003" name="Science">
        <title>A genomic view of the human-Bacteroides thetaiotaomicron symbiosis.</title>
        <authorList>
            <person name="Xu J."/>
            <person name="Bjursell M.K."/>
            <person name="Himrod J."/>
            <person name="Deng S."/>
            <person name="Carmichael L.K."/>
            <person name="Chiang H.C."/>
            <person name="Hooper L.V."/>
            <person name="Gordon J.I."/>
        </authorList>
    </citation>
    <scope>NUCLEOTIDE SEQUENCE [LARGE SCALE GENOMIC DNA]</scope>
    <source>
        <strain>ATCC 29148 / DSM 2079 / JCM 5827 / CCUG 10774 / NCTC 10582 / VPI-5482 / E50</strain>
    </source>
</reference>
<comment type="function">
    <text evidence="1">This enzyme is involved in nucleotide metabolism: it produces dUMP, the immediate precursor of thymidine nucleotides and it decreases the intracellular concentration of dUTP so that uracil cannot be incorporated into DNA.</text>
</comment>
<comment type="catalytic activity">
    <reaction evidence="1">
        <text>dUTP + H2O = dUMP + diphosphate + H(+)</text>
        <dbReference type="Rhea" id="RHEA:10248"/>
        <dbReference type="ChEBI" id="CHEBI:15377"/>
        <dbReference type="ChEBI" id="CHEBI:15378"/>
        <dbReference type="ChEBI" id="CHEBI:33019"/>
        <dbReference type="ChEBI" id="CHEBI:61555"/>
        <dbReference type="ChEBI" id="CHEBI:246422"/>
        <dbReference type="EC" id="3.6.1.23"/>
    </reaction>
</comment>
<comment type="cofactor">
    <cofactor evidence="1">
        <name>Mg(2+)</name>
        <dbReference type="ChEBI" id="CHEBI:18420"/>
    </cofactor>
</comment>
<comment type="pathway">
    <text evidence="1">Pyrimidine metabolism; dUMP biosynthesis; dUMP from dCTP (dUTP route): step 2/2.</text>
</comment>
<comment type="similarity">
    <text evidence="1">Belongs to the dUTPase family.</text>
</comment>
<accession>Q8A245</accession>
<keyword id="KW-0378">Hydrolase</keyword>
<keyword id="KW-0460">Magnesium</keyword>
<keyword id="KW-0479">Metal-binding</keyword>
<keyword id="KW-0546">Nucleotide metabolism</keyword>
<keyword id="KW-1185">Reference proteome</keyword>
<proteinExistence type="inferred from homology"/>
<organism>
    <name type="scientific">Bacteroides thetaiotaomicron (strain ATCC 29148 / DSM 2079 / JCM 5827 / CCUG 10774 / NCTC 10582 / VPI-5482 / E50)</name>
    <dbReference type="NCBI Taxonomy" id="226186"/>
    <lineage>
        <taxon>Bacteria</taxon>
        <taxon>Pseudomonadati</taxon>
        <taxon>Bacteroidota</taxon>
        <taxon>Bacteroidia</taxon>
        <taxon>Bacteroidales</taxon>
        <taxon>Bacteroidaceae</taxon>
        <taxon>Bacteroides</taxon>
    </lineage>
</organism>
<evidence type="ECO:0000255" key="1">
    <source>
        <dbReference type="HAMAP-Rule" id="MF_00116"/>
    </source>
</evidence>